<accession>P77933</accession>
<accession>Q5JEA7</accession>
<protein>
    <recommendedName>
        <fullName>DNA polymerase</fullName>
        <ecNumber evidence="3">2.7.7.7</ecNumber>
    </recommendedName>
    <component>
        <recommendedName>
            <fullName evidence="5 6">Homing endonuclease PI-PkoI</fullName>
            <ecNumber evidence="4">3.1.-.-</ecNumber>
        </recommendedName>
        <alternativeName>
            <fullName>IVS-A</fullName>
        </alternativeName>
        <alternativeName>
            <fullName>Pko pol-1 intein</fullName>
        </alternativeName>
    </component>
    <component>
        <recommendedName>
            <fullName evidence="5 6">Homing endonuclease PI-PkoII</fullName>
            <ecNumber evidence="4">3.1.-.-</ecNumber>
        </recommendedName>
        <alternativeName>
            <fullName>IVS-B</fullName>
        </alternativeName>
        <alternativeName>
            <fullName>Pko pol-2 intein</fullName>
        </alternativeName>
    </component>
</protein>
<sequence length="1671" mass="193405">MILDTDYITEDGKPVIRIFKKENGEFKIEYDRTFEPYFYALLKDDSAIEEVKKITAERHGTVVTVKRVEKVQKKFLGRPVEVWKLYFTHPQDVPAIRDKIREHPAVIDIYEYDIPFAKRYLIDKGLVPMEGDEELKMLAFDIETLYHEGEEFAEGPILMISYADEEGARVITWKNVDLPYVDVVSTEREMIKRFLRVVKEKDPDVLITYNGDNFDFAYLKKRCEKLGINFALGRDGSEPKIQRMGDRFAVEVKGRIHFDLYPVIRRTINLPTYTLEAVYEAVFGQPKEKVYAEEITTAWETGENLERVARYSMEDAKVTYELGKEFLPMEAQLSRLIGQSLWDVSRSSTGNLVEWFLLRKAYERNELAPNKPDEKELARRRQSYEGGYVKEPERGLWENIVYLDFRCHPADTKVVVKGKGIINISEVQEGDYVLGIDGWQRVRKVWEYDYKGELVNINGLKCTPNHKLPVVTKNERQTRIRDSLAKSFLTKKVKGKIITTPLFYEIGRATSENIPEEEVLKGELAGILLAEGTLLRKDVEYFDSSRKKRRISHQYRVEITIGKDEEEFRDRITYIFERLFGITPSISEKKGTNAVTLKVAKKNVYLKVKEIMDNIESLHAPSVLRGFFEGDGSVNRVRRSIVATQGTKNEWKIKLVSKLLSQLGIPHQTYTYQYQENGKDRSRYILEITGKDGLILFQTLIGFISERKNALLNKAISQREMNNLENNGFYRLSEFNVSTEYYEGKVYDLTLEGTPYYFANGILTHNSLYPSIIITHNVSPDTLNREGCKEYDVAPQVGHRFCKDFPGFIPSLLGDLLEERQKIKKKMKATIDPIERKLLDYRQRAIKILANSILPEEWLPVLEEGEVHFVRIGELIDRMMEENAGKVKREGETEVLEVSGLEVPSFNRRTKKAELKRVKALIRHDYSGKVYTIRLKSGRRIKITSGHSLFSVRNGELVEVTGDELKPGDLVAVPRRLELPERNHVLNLVELLLGTPEEETLDIVMTIPVKGKKNFFKGMLRTLRWIFGEEKRPRTARRYLRHLEDLGYVRLKKIGYEVLDWDSLKNYRRLYEALVENVRYNGNKREYLVEFNSIRDAVGIMPLKELKEWKIGTLNGFRMSPLIEVDESLAKLLGYYVSEGYARKQRNPKNGWSYSVKLYNEDPEVLDDMERLASRFFGKVRRGRNYVEIPKKIGYLLFENMCGVLAENKRIPEFVFTSPKGVRLAFLEGYFIGDGDVHPNKRLRLSTKSELLANQLVLLLNSVGVSAVKLGHDSGVYRVYINEELPFVKLDKKKNAYYSHVIPKEVLSEVFGKVFQKNVSPQTFRKMVEDGRLDPEKAQRLSWLIEGDVVLDRVESVDVEDYDGYVYDLSVEDNENFLVGFGLVYAHNSYYGYYGYARARWYCKECAESVTAWGREYITMTIKEIEEKYGFKVIYSDTDGFFATIPGADAETVKKKAMEFLKYINAKLPGALELEYEGFYKRGFFVTKKKYAVIDEEGKITTRGLEIVRRDWSEIAKETQARVLEALLKDGDVEKAVRIVKEVTEKLSKYEVPPEKLVIHEQITRDLKDYKATGPHVAVAKRLAARGVKIRPGTVISYIVLKGSGRIGDRAIPFDEFDPTKHKYDAEYYIENQVLPAVERILRAFGYRKEDLRYQKTRQVGLSAWLKPKGT</sequence>
<feature type="chain" id="PRO_0000007325" description="DNA polymerase, 1st part">
    <location>
        <begin position="1"/>
        <end position="407"/>
    </location>
</feature>
<feature type="chain" id="PRO_0000007326" description="Homing endonuclease PI-PkoI" evidence="4">
    <location>
        <begin position="408"/>
        <end position="766"/>
    </location>
</feature>
<feature type="chain" id="PRO_0000007327" description="DNA polymerase, 2nd part">
    <location>
        <begin position="767"/>
        <end position="851"/>
    </location>
</feature>
<feature type="chain" id="PRO_0000007328" description="Homing endonuclease PI-PkoII" evidence="4">
    <location>
        <begin position="852"/>
        <end position="1388"/>
    </location>
</feature>
<feature type="chain" id="PRO_0000007329" description="DNA polymerase, 3rd part">
    <location>
        <begin position="1389"/>
        <end position="1671"/>
    </location>
</feature>
<feature type="domain" description="DOD-type homing endonuclease 1" evidence="1">
    <location>
        <begin position="524"/>
        <end position="665"/>
    </location>
</feature>
<feature type="domain" description="DOD-type homing endonuclease 2" evidence="1">
    <location>
        <begin position="1132"/>
        <end position="1265"/>
    </location>
</feature>
<feature type="region of interest" description="3'-5' exonuclease" evidence="7">
    <location>
        <begin position="135"/>
        <end position="326"/>
    </location>
</feature>
<feature type="disulfide bond" evidence="2 10">
    <location>
        <begin position="788"/>
        <end position="802"/>
    </location>
</feature>
<feature type="disulfide bond" evidence="2 10">
    <location>
        <begin position="1403"/>
        <end position="1406"/>
    </location>
</feature>
<feature type="sequence conflict" description="In Ref. 1; BAA06142." evidence="7" ref="1">
    <original>K</original>
    <variation>N</variation>
    <location>
        <position position="911"/>
    </location>
</feature>
<feature type="sequence conflict" description="In Ref. 1; BAA06142." evidence="7" ref="1">
    <original>SP</original>
    <variation>RK</variation>
    <location>
        <begin position="1120"/>
        <end position="1121"/>
    </location>
</feature>
<feature type="strand" evidence="14">
    <location>
        <begin position="2"/>
        <end position="10"/>
    </location>
</feature>
<feature type="strand" evidence="14">
    <location>
        <begin position="13"/>
        <end position="22"/>
    </location>
</feature>
<feature type="strand" evidence="14">
    <location>
        <begin position="25"/>
        <end position="31"/>
    </location>
</feature>
<feature type="strand" evidence="14">
    <location>
        <begin position="37"/>
        <end position="44"/>
    </location>
</feature>
<feature type="helix" evidence="14">
    <location>
        <begin position="45"/>
        <end position="47"/>
    </location>
</feature>
<feature type="helix" evidence="14">
    <location>
        <begin position="48"/>
        <end position="52"/>
    </location>
</feature>
<feature type="strand" evidence="14">
    <location>
        <begin position="56"/>
        <end position="58"/>
    </location>
</feature>
<feature type="strand" evidence="14">
    <location>
        <begin position="61"/>
        <end position="63"/>
    </location>
</feature>
<feature type="strand" evidence="14">
    <location>
        <begin position="67"/>
        <end position="75"/>
    </location>
</feature>
<feature type="strand" evidence="14">
    <location>
        <begin position="78"/>
        <end position="86"/>
    </location>
</feature>
<feature type="helix" evidence="14">
    <location>
        <begin position="92"/>
        <end position="102"/>
    </location>
</feature>
<feature type="strand" evidence="14">
    <location>
        <begin position="106"/>
        <end position="111"/>
    </location>
</feature>
<feature type="helix" evidence="14">
    <location>
        <begin position="116"/>
        <end position="123"/>
    </location>
</feature>
<feature type="strand" evidence="14">
    <location>
        <begin position="137"/>
        <end position="144"/>
    </location>
</feature>
<feature type="strand" evidence="14">
    <location>
        <begin position="157"/>
        <end position="164"/>
    </location>
</feature>
<feature type="strand" evidence="14">
    <location>
        <begin position="167"/>
        <end position="174"/>
    </location>
</feature>
<feature type="strand" evidence="14">
    <location>
        <begin position="181"/>
        <end position="183"/>
    </location>
</feature>
<feature type="helix" evidence="14">
    <location>
        <begin position="187"/>
        <end position="201"/>
    </location>
</feature>
<feature type="strand" evidence="14">
    <location>
        <begin position="204"/>
        <end position="210"/>
    </location>
</feature>
<feature type="turn" evidence="14">
    <location>
        <begin position="211"/>
        <end position="214"/>
    </location>
</feature>
<feature type="helix" evidence="14">
    <location>
        <begin position="215"/>
        <end position="226"/>
    </location>
</feature>
<feature type="strand" evidence="14">
    <location>
        <begin position="240"/>
        <end position="244"/>
    </location>
</feature>
<feature type="strand" evidence="14">
    <location>
        <begin position="247"/>
        <end position="251"/>
    </location>
</feature>
<feature type="strand" evidence="14">
    <location>
        <begin position="255"/>
        <end position="259"/>
    </location>
</feature>
<feature type="helix" evidence="14">
    <location>
        <begin position="260"/>
        <end position="267"/>
    </location>
</feature>
<feature type="helix" evidence="14">
    <location>
        <begin position="275"/>
        <end position="283"/>
    </location>
</feature>
<feature type="helix" evidence="14">
    <location>
        <begin position="292"/>
        <end position="301"/>
    </location>
</feature>
<feature type="helix" evidence="14">
    <location>
        <begin position="305"/>
        <end position="337"/>
    </location>
</feature>
<feature type="helix" evidence="14">
    <location>
        <begin position="341"/>
        <end position="345"/>
    </location>
</feature>
<feature type="helix" evidence="14">
    <location>
        <begin position="349"/>
        <end position="363"/>
    </location>
</feature>
<feature type="helix" evidence="14">
    <location>
        <begin position="374"/>
        <end position="379"/>
    </location>
</feature>
<feature type="strand" evidence="14">
    <location>
        <begin position="395"/>
        <end position="406"/>
    </location>
</feature>
<feature type="helix" evidence="14">
    <location>
        <begin position="768"/>
        <end position="775"/>
    </location>
</feature>
<feature type="turn" evidence="14">
    <location>
        <begin position="780"/>
        <end position="782"/>
    </location>
</feature>
<feature type="strand" evidence="14">
    <location>
        <begin position="791"/>
        <end position="793"/>
    </location>
</feature>
<feature type="turn" evidence="14">
    <location>
        <begin position="795"/>
        <end position="797"/>
    </location>
</feature>
<feature type="strand" evidence="14">
    <location>
        <begin position="800"/>
        <end position="802"/>
    </location>
</feature>
<feature type="helix" evidence="14">
    <location>
        <begin position="808"/>
        <end position="829"/>
    </location>
</feature>
<feature type="helix" evidence="14">
    <location>
        <begin position="833"/>
        <end position="850"/>
    </location>
</feature>
<feature type="strand" evidence="12">
    <location>
        <begin position="858"/>
        <end position="863"/>
    </location>
</feature>
<feature type="strand" evidence="12">
    <location>
        <begin position="866"/>
        <end position="871"/>
    </location>
</feature>
<feature type="helix" evidence="12">
    <location>
        <begin position="872"/>
        <end position="881"/>
    </location>
</feature>
<feature type="helix" evidence="12">
    <location>
        <begin position="884"/>
        <end position="886"/>
    </location>
</feature>
<feature type="strand" evidence="12">
    <location>
        <begin position="888"/>
        <end position="890"/>
    </location>
</feature>
<feature type="strand" evidence="12">
    <location>
        <begin position="893"/>
        <end position="897"/>
    </location>
</feature>
<feature type="strand" evidence="12">
    <location>
        <begin position="900"/>
        <end position="906"/>
    </location>
</feature>
<feature type="turn" evidence="12">
    <location>
        <begin position="908"/>
        <end position="910"/>
    </location>
</feature>
<feature type="strand" evidence="12">
    <location>
        <begin position="913"/>
        <end position="935"/>
    </location>
</feature>
<feature type="strand" evidence="12">
    <location>
        <begin position="940"/>
        <end position="944"/>
    </location>
</feature>
<feature type="strand" evidence="12">
    <location>
        <begin position="948"/>
        <end position="953"/>
    </location>
</feature>
<feature type="strand" evidence="12">
    <location>
        <begin position="956"/>
        <end position="961"/>
    </location>
</feature>
<feature type="turn" evidence="12">
    <location>
        <begin position="962"/>
        <end position="964"/>
    </location>
</feature>
<feature type="strand" evidence="12">
    <location>
        <begin position="970"/>
        <end position="975"/>
    </location>
</feature>
<feature type="strand" evidence="12">
    <location>
        <begin position="985"/>
        <end position="987"/>
    </location>
</feature>
<feature type="helix" evidence="12">
    <location>
        <begin position="988"/>
        <end position="993"/>
    </location>
</feature>
<feature type="helix" evidence="12">
    <location>
        <begin position="997"/>
        <end position="999"/>
    </location>
</feature>
<feature type="strand" evidence="12">
    <location>
        <begin position="1004"/>
        <end position="1011"/>
    </location>
</feature>
<feature type="helix" evidence="12">
    <location>
        <begin position="1015"/>
        <end position="1026"/>
    </location>
</feature>
<feature type="helix" evidence="12">
    <location>
        <begin position="1036"/>
        <end position="1046"/>
    </location>
</feature>
<feature type="strand" evidence="12">
    <location>
        <begin position="1048"/>
        <end position="1051"/>
    </location>
</feature>
<feature type="strand" evidence="12">
    <location>
        <begin position="1053"/>
        <end position="1059"/>
    </location>
</feature>
<feature type="helix" evidence="12">
    <location>
        <begin position="1061"/>
        <end position="1077"/>
    </location>
</feature>
<feature type="strand" evidence="11">
    <location>
        <begin position="1079"/>
        <end position="1081"/>
    </location>
</feature>
<feature type="turn" evidence="12">
    <location>
        <begin position="1082"/>
        <end position="1084"/>
    </location>
</feature>
<feature type="strand" evidence="12">
    <location>
        <begin position="1085"/>
        <end position="1088"/>
    </location>
</feature>
<feature type="helix" evidence="12">
    <location>
        <begin position="1091"/>
        <end position="1094"/>
    </location>
</feature>
<feature type="helix" evidence="12">
    <location>
        <begin position="1095"/>
        <end position="1098"/>
    </location>
</feature>
<feature type="helix" evidence="12">
    <location>
        <begin position="1103"/>
        <end position="1106"/>
    </location>
</feature>
<feature type="strand" evidence="12">
    <location>
        <begin position="1110"/>
        <end position="1112"/>
    </location>
</feature>
<feature type="strand" evidence="12">
    <location>
        <begin position="1118"/>
        <end position="1124"/>
    </location>
</feature>
<feature type="helix" evidence="12">
    <location>
        <begin position="1127"/>
        <end position="1139"/>
    </location>
</feature>
<feature type="strand" evidence="12">
    <location>
        <begin position="1140"/>
        <end position="1145"/>
    </location>
</feature>
<feature type="turn" evidence="12">
    <location>
        <begin position="1147"/>
        <end position="1150"/>
    </location>
</feature>
<feature type="strand" evidence="12">
    <location>
        <begin position="1153"/>
        <end position="1159"/>
    </location>
</feature>
<feature type="helix" evidence="12">
    <location>
        <begin position="1163"/>
        <end position="1177"/>
    </location>
</feature>
<feature type="strand" evidence="12">
    <location>
        <begin position="1184"/>
        <end position="1189"/>
    </location>
</feature>
<feature type="helix" evidence="12">
    <location>
        <begin position="1192"/>
        <end position="1202"/>
    </location>
</feature>
<feature type="helix" evidence="12">
    <location>
        <begin position="1206"/>
        <end position="1208"/>
    </location>
</feature>
<feature type="helix" evidence="12">
    <location>
        <begin position="1213"/>
        <end position="1215"/>
    </location>
</feature>
<feature type="helix" evidence="12">
    <location>
        <begin position="1220"/>
        <end position="1234"/>
    </location>
</feature>
<feature type="strand" evidence="12">
    <location>
        <begin position="1240"/>
        <end position="1248"/>
    </location>
</feature>
<feature type="helix" evidence="12">
    <location>
        <begin position="1250"/>
        <end position="1262"/>
    </location>
</feature>
<feature type="strand" evidence="12">
    <location>
        <begin position="1268"/>
        <end position="1272"/>
    </location>
</feature>
<feature type="strand" evidence="12">
    <location>
        <begin position="1277"/>
        <end position="1281"/>
    </location>
</feature>
<feature type="turn" evidence="12">
    <location>
        <begin position="1292"/>
        <end position="1295"/>
    </location>
</feature>
<feature type="helix" evidence="12">
    <location>
        <begin position="1298"/>
        <end position="1300"/>
    </location>
</feature>
<feature type="helix" evidence="12">
    <location>
        <begin position="1304"/>
        <end position="1311"/>
    </location>
</feature>
<feature type="helix" evidence="12">
    <location>
        <begin position="1321"/>
        <end position="1329"/>
    </location>
</feature>
<feature type="helix" evidence="12">
    <location>
        <begin position="1335"/>
        <end position="1338"/>
    </location>
</feature>
<feature type="helix" evidence="12">
    <location>
        <begin position="1339"/>
        <end position="1341"/>
    </location>
</feature>
<feature type="helix" evidence="12">
    <location>
        <begin position="1342"/>
        <end position="1346"/>
    </location>
</feature>
<feature type="strand" evidence="12">
    <location>
        <begin position="1347"/>
        <end position="1371"/>
    </location>
</feature>
<feature type="turn" evidence="12">
    <location>
        <begin position="1372"/>
        <end position="1374"/>
    </location>
</feature>
<feature type="strand" evidence="12">
    <location>
        <begin position="1376"/>
        <end position="1379"/>
    </location>
</feature>
<feature type="strand" evidence="12">
    <location>
        <begin position="1384"/>
        <end position="1387"/>
    </location>
</feature>
<feature type="helix" evidence="14">
    <location>
        <begin position="1390"/>
        <end position="1394"/>
    </location>
</feature>
<feature type="helix" evidence="14">
    <location>
        <begin position="1404"/>
        <end position="1429"/>
    </location>
</feature>
<feature type="strand" evidence="14">
    <location>
        <begin position="1432"/>
        <end position="1444"/>
    </location>
</feature>
<feature type="helix" evidence="14">
    <location>
        <begin position="1450"/>
        <end position="1467"/>
    </location>
</feature>
<feature type="strand" evidence="14">
    <location>
        <begin position="1474"/>
        <end position="1487"/>
    </location>
</feature>
<feature type="strand" evidence="14">
    <location>
        <begin position="1490"/>
        <end position="1495"/>
    </location>
</feature>
<feature type="strand" evidence="14">
    <location>
        <begin position="1500"/>
        <end position="1505"/>
    </location>
</feature>
<feature type="helix" evidence="14">
    <location>
        <begin position="1506"/>
        <end position="1508"/>
    </location>
</feature>
<feature type="strand" evidence="13">
    <location>
        <begin position="1510"/>
        <end position="1512"/>
    </location>
</feature>
<feature type="helix" evidence="14">
    <location>
        <begin position="1514"/>
        <end position="1528"/>
    </location>
</feature>
<feature type="helix" evidence="14">
    <location>
        <begin position="1533"/>
        <end position="1548"/>
    </location>
</feature>
<feature type="helix" evidence="14">
    <location>
        <begin position="1554"/>
        <end position="1557"/>
    </location>
</feature>
<feature type="strand" evidence="14">
    <location>
        <begin position="1559"/>
        <end position="1562"/>
    </location>
</feature>
<feature type="helix" evidence="14">
    <location>
        <begin position="1567"/>
        <end position="1569"/>
    </location>
</feature>
<feature type="helix" evidence="14">
    <location>
        <begin position="1575"/>
        <end position="1585"/>
    </location>
</feature>
<feature type="strand" evidence="14">
    <location>
        <begin position="1595"/>
        <end position="1602"/>
    </location>
</feature>
<feature type="helix" evidence="14">
    <location>
        <begin position="1607"/>
        <end position="1610"/>
    </location>
</feature>
<feature type="strand" evidence="14">
    <location>
        <begin position="1611"/>
        <end position="1613"/>
    </location>
</feature>
<feature type="helix" evidence="14">
    <location>
        <begin position="1614"/>
        <end position="1616"/>
    </location>
</feature>
<feature type="turn" evidence="14">
    <location>
        <begin position="1619"/>
        <end position="1621"/>
    </location>
</feature>
<feature type="helix" evidence="14">
    <location>
        <begin position="1626"/>
        <end position="1631"/>
    </location>
</feature>
<feature type="helix" evidence="14">
    <location>
        <begin position="1634"/>
        <end position="1642"/>
    </location>
</feature>
<feature type="helix" evidence="14">
    <location>
        <begin position="1643"/>
        <end position="1645"/>
    </location>
</feature>
<feature type="helix" evidence="14">
    <location>
        <begin position="1649"/>
        <end position="1651"/>
    </location>
</feature>
<reference key="1">
    <citation type="journal article" date="1997" name="Appl. Environ. Microbiol.">
        <title>Characterization of DNA polymerase from Pyrococcus sp. strain KOD1 and its application to PCR.</title>
        <authorList>
            <person name="Takagi M."/>
            <person name="Nishioka M."/>
            <person name="Kakihara H."/>
            <person name="Kitabayashi M."/>
            <person name="Inoue H."/>
            <person name="Kawakami B."/>
            <person name="Oka M."/>
            <person name="Imanaka T."/>
        </authorList>
    </citation>
    <scope>NUCLEOTIDE SEQUENCE [GENOMIC DNA]</scope>
    <scope>FUNCTION</scope>
    <scope>CATALYTIC ACTIVITY</scope>
    <scope>PROBABLE INTEINS</scope>
    <scope>BIOPHYSICOCHEMICAL PROPERTIES</scope>
    <scope>BIOTECHNOLOGY</scope>
    <source>
        <strain>ATCC BAA-918 / JCM 12380 / KOD1</strain>
    </source>
</reference>
<reference key="2">
    <citation type="journal article" date="2005" name="Genome Res.">
        <title>Complete genome sequence of the hyperthermophilic archaeon Thermococcus kodakaraensis KOD1 and comparison with Pyrococcus genomes.</title>
        <authorList>
            <person name="Fukui T."/>
            <person name="Atomi H."/>
            <person name="Kanai T."/>
            <person name="Matsumi R."/>
            <person name="Fujiwara S."/>
            <person name="Imanaka T."/>
        </authorList>
    </citation>
    <scope>NUCLEOTIDE SEQUENCE [LARGE SCALE GENOMIC DNA]</scope>
    <source>
        <strain>ATCC BAA-918 / JCM 12380 / KOD1</strain>
    </source>
</reference>
<reference key="3">
    <citation type="journal article" date="1998" name="Nucleic Acids Res.">
        <title>Characterization of two intein homing endonucleases encoded in the DNA polymerase gene of Pyrococcus kodakaraensis strain KOD1.</title>
        <authorList>
            <person name="Nishioka M."/>
            <person name="Fujiwara S."/>
            <person name="Takagi M."/>
            <person name="Imanaka T."/>
        </authorList>
    </citation>
    <scope>PROTEIN SEQUENCE OF 408-411 AND 852-857</scope>
    <scope>CHARACTERIZATION OF INTEIN ENDONUCLEASE ACTIVITY</scope>
    <scope>FUNCTION</scope>
    <scope>CATALYTIC ACTIVITY</scope>
    <scope>BIOPHYSICOCHEMICAL PROPERTIES</scope>
    <source>
        <strain>ATCC BAA-918 / JCM 12380 / KOD1</strain>
    </source>
</reference>
<reference key="4">
    <citation type="journal article" date="2003" name="Nucleic Acids Res.">
        <title>A nomenclature for restriction enzymes, DNA methyltransferases, homing endonucleases and their genes.</title>
        <authorList>
            <person name="Roberts R.J."/>
            <person name="Belfort M."/>
            <person name="Bestor T."/>
            <person name="Bhagwat A.S."/>
            <person name="Bickle T.A."/>
            <person name="Bitinaite J."/>
            <person name="Blumenthal R.M."/>
            <person name="Degtyarev S.K."/>
            <person name="Dryden D.T."/>
            <person name="Dybvig K."/>
            <person name="Firman K."/>
            <person name="Gromova E.S."/>
            <person name="Gumport R.I."/>
            <person name="Halford S.E."/>
            <person name="Hattman S."/>
            <person name="Heitman J."/>
            <person name="Hornby D.P."/>
            <person name="Janulaitis A."/>
            <person name="Jeltsch A."/>
            <person name="Josephsen J."/>
            <person name="Kiss A."/>
            <person name="Klaenhammer T.R."/>
            <person name="Kobayashi I."/>
            <person name="Kong H."/>
            <person name="Krueger D.H."/>
            <person name="Lacks S."/>
            <person name="Marinus M.G."/>
            <person name="Miyahara M."/>
            <person name="Morgan R.D."/>
            <person name="Murray N.E."/>
            <person name="Nagaraja V."/>
            <person name="Piekarowicz A."/>
            <person name="Pingoud A."/>
            <person name="Raleigh E."/>
            <person name="Rao D.N."/>
            <person name="Reich N."/>
            <person name="Repin V.E."/>
            <person name="Selker E.U."/>
            <person name="Shaw P.C."/>
            <person name="Stein D.C."/>
            <person name="Stoddard B.L."/>
            <person name="Szybalski W."/>
            <person name="Trautner T.A."/>
            <person name="Van Etten J.L."/>
            <person name="Vitor J.M."/>
            <person name="Wilson G.G."/>
            <person name="Xu S.Y."/>
        </authorList>
    </citation>
    <scope>NOMENCLATURE</scope>
</reference>
<reference evidence="10" key="5">
    <citation type="journal article" date="2001" name="J. Mol. Biol.">
        <title>Crystal structure of DNA polymerase from hyperthermophilic archaeon Pyrococcus kodakaraensis KOD1.</title>
        <authorList>
            <person name="Hashimoto H."/>
            <person name="Nishioka M."/>
            <person name="Fujiwara S."/>
            <person name="Takagi M."/>
            <person name="Imanaka T."/>
            <person name="Inoue T."/>
            <person name="Kai Y."/>
        </authorList>
    </citation>
    <scope>X-RAY CRYSTALLOGRAPHY (3.0 ANGSTROMS) OF DNA POLYMERASE</scope>
    <scope>DISULFIDE BONDS</scope>
</reference>
<comment type="function">
    <text evidence="3">Has high processivity, a high polymerization rate and high fidelity. In addition to polymerase activity, also exhibits 3' to 5' exonuclease activity.</text>
</comment>
<comment type="function">
    <text evidence="4 7">Intein encoded endonucleases are thought to mediate intein mobility by site-specific recombination initiated by endonuclease cleavage at the 'homing site' in genes that lack the intein (Probable). Upon expression in E.coli PI-PkoI recognizes the minimal sequence 5'-GATTTTAGATCCCTGTACC-3' and cuts after T-10. PI-PkoII recognizes the minimal sequence 5'-CAGCTACTACGGTTAC-3' and cuts after C-10. Given the high intracellular K(+) content (&gt;0.5 M), PI-PkoII is probably more active than PI-PkoI in vivo (PubMed:9742242).</text>
</comment>
<comment type="catalytic activity">
    <reaction evidence="3">
        <text>DNA(n) + a 2'-deoxyribonucleoside 5'-triphosphate = DNA(n+1) + diphosphate</text>
        <dbReference type="Rhea" id="RHEA:22508"/>
        <dbReference type="Rhea" id="RHEA-COMP:17339"/>
        <dbReference type="Rhea" id="RHEA-COMP:17340"/>
        <dbReference type="ChEBI" id="CHEBI:33019"/>
        <dbReference type="ChEBI" id="CHEBI:61560"/>
        <dbReference type="ChEBI" id="CHEBI:173112"/>
        <dbReference type="EC" id="2.7.7.7"/>
    </reaction>
</comment>
<comment type="biophysicochemical properties">
    <phDependence>
        <text evidence="3">DNA polymerase optimum pH is 6.5, very thermostable, has a half-life of 12 hours at 95 and 3 hours at 100 degrees Celsius, for protein cloned without inteins in E.coli.</text>
    </phDependence>
    <temperatureDependence>
        <text evidence="3 4">DNA polymerase optimum temperature is 75 degrees Celsius, for protein cloned without inteins in E.coli (PubMed:9361436). Both intein endonucleases are thermostable (PubMed:9742242).</text>
    </temperatureDependence>
</comment>
<comment type="PTM">
    <text evidence="8 9">Undergoes a protein self splicing that involves a post-translational excision of the intervening region (intein) followed by peptide ligation.</text>
</comment>
<comment type="biotechnology">
    <text evidence="3">Pyrococcus kodakaraensis enzyme is a very fast, thermostable DNA polymerase (130 nucleotides/s) used in high-performance PCR.</text>
</comment>
<comment type="similarity">
    <text evidence="7">Belongs to the DNA polymerase type-B family.</text>
</comment>
<gene>
    <name type="primary">pol</name>
    <name type="ordered locus">TK0001</name>
</gene>
<dbReference type="EC" id="2.7.7.7" evidence="3"/>
<dbReference type="EC" id="3.1.-.-" evidence="4"/>
<dbReference type="EMBL" id="D29671">
    <property type="protein sequence ID" value="BAA06142.2"/>
    <property type="molecule type" value="Genomic_DNA"/>
</dbReference>
<dbReference type="EMBL" id="AP006878">
    <property type="protein sequence ID" value="BAD84190.1"/>
    <property type="molecule type" value="Genomic_DNA"/>
</dbReference>
<dbReference type="PIR" id="S71551">
    <property type="entry name" value="S71551"/>
</dbReference>
<dbReference type="RefSeq" id="WP_011248956.1">
    <property type="nucleotide sequence ID" value="NC_006624.1"/>
</dbReference>
<dbReference type="PDB" id="1WN7">
    <property type="method" value="X-ray"/>
    <property type="resolution" value="2.75 A"/>
    <property type="chains" value="A=1-810"/>
</dbReference>
<dbReference type="PDB" id="1WNS">
    <property type="method" value="X-ray"/>
    <property type="resolution" value="3.00 A"/>
    <property type="chains" value="A=1-1671"/>
</dbReference>
<dbReference type="PDB" id="2CW7">
    <property type="method" value="X-ray"/>
    <property type="resolution" value="2.70 A"/>
    <property type="chains" value="A=852-1388"/>
</dbReference>
<dbReference type="PDB" id="2CW8">
    <property type="method" value="X-ray"/>
    <property type="resolution" value="2.50 A"/>
    <property type="chains" value="A=852-1388"/>
</dbReference>
<dbReference type="PDB" id="4K8Z">
    <property type="method" value="X-ray"/>
    <property type="resolution" value="2.29 A"/>
    <property type="chains" value="A=1-1671"/>
</dbReference>
<dbReference type="PDB" id="5OMF">
    <property type="method" value="X-ray"/>
    <property type="resolution" value="2.09 A"/>
    <property type="chains" value="A=1-1671"/>
</dbReference>
<dbReference type="PDB" id="6Q4T">
    <property type="method" value="X-ray"/>
    <property type="resolution" value="2.00 A"/>
    <property type="chains" value="A=1-1671"/>
</dbReference>
<dbReference type="PDB" id="7OM3">
    <property type="method" value="X-ray"/>
    <property type="resolution" value="1.92 A"/>
    <property type="chains" value="A=1-1671"/>
</dbReference>
<dbReference type="PDB" id="7OMB">
    <property type="method" value="X-ray"/>
    <property type="resolution" value="2.01 A"/>
    <property type="chains" value="A=1-1671"/>
</dbReference>
<dbReference type="PDB" id="7OMG">
    <property type="method" value="X-ray"/>
    <property type="resolution" value="2.10 A"/>
    <property type="chains" value="A=1-1671"/>
</dbReference>
<dbReference type="PDB" id="7RSU">
    <property type="method" value="X-ray"/>
    <property type="resolution" value="2.10 A"/>
    <property type="chains" value="A=1-1671"/>
</dbReference>
<dbReference type="PDBsum" id="1WN7"/>
<dbReference type="PDBsum" id="1WNS"/>
<dbReference type="PDBsum" id="2CW7"/>
<dbReference type="PDBsum" id="2CW8"/>
<dbReference type="PDBsum" id="4K8Z"/>
<dbReference type="PDBsum" id="5OMF"/>
<dbReference type="PDBsum" id="6Q4T"/>
<dbReference type="PDBsum" id="7OM3"/>
<dbReference type="PDBsum" id="7OMB"/>
<dbReference type="PDBsum" id="7OMG"/>
<dbReference type="PDBsum" id="7RSU"/>
<dbReference type="SMR" id="P77933"/>
<dbReference type="FunCoup" id="P77933">
    <property type="interactions" value="144"/>
</dbReference>
<dbReference type="STRING" id="69014.TK0001"/>
<dbReference type="MEROPS" id="N10.007"/>
<dbReference type="REBASE" id="3792">
    <property type="entry name" value="PI-PkoI"/>
</dbReference>
<dbReference type="REBASE" id="3793">
    <property type="entry name" value="PI-PkoII"/>
</dbReference>
<dbReference type="EnsemblBacteria" id="BAD84190">
    <property type="protein sequence ID" value="BAD84190"/>
    <property type="gene ID" value="TK0001"/>
</dbReference>
<dbReference type="GeneID" id="78446501"/>
<dbReference type="KEGG" id="tko:TK0001"/>
<dbReference type="PATRIC" id="fig|69014.16.peg.1"/>
<dbReference type="eggNOG" id="arCOG00328">
    <property type="taxonomic scope" value="Archaea"/>
</dbReference>
<dbReference type="eggNOG" id="arCOG03145">
    <property type="taxonomic scope" value="Archaea"/>
</dbReference>
<dbReference type="HOGENOM" id="CLU_000203_6_4_2"/>
<dbReference type="InParanoid" id="P77933"/>
<dbReference type="OrthoDB" id="323192at2157"/>
<dbReference type="BRENDA" id="2.7.7.7">
    <property type="organism ID" value="5246"/>
</dbReference>
<dbReference type="EvolutionaryTrace" id="P77933"/>
<dbReference type="Proteomes" id="UP000000536">
    <property type="component" value="Chromosome"/>
</dbReference>
<dbReference type="GO" id="GO:0003677">
    <property type="term" value="F:DNA binding"/>
    <property type="evidence" value="ECO:0007669"/>
    <property type="project" value="UniProtKB-KW"/>
</dbReference>
<dbReference type="GO" id="GO:0003887">
    <property type="term" value="F:DNA-directed DNA polymerase activity"/>
    <property type="evidence" value="ECO:0000318"/>
    <property type="project" value="GO_Central"/>
</dbReference>
<dbReference type="GO" id="GO:0004519">
    <property type="term" value="F:endonuclease activity"/>
    <property type="evidence" value="ECO:0007669"/>
    <property type="project" value="UniProtKB-KW"/>
</dbReference>
<dbReference type="GO" id="GO:0004527">
    <property type="term" value="F:exonuclease activity"/>
    <property type="evidence" value="ECO:0007669"/>
    <property type="project" value="UniProtKB-KW"/>
</dbReference>
<dbReference type="GO" id="GO:0000166">
    <property type="term" value="F:nucleotide binding"/>
    <property type="evidence" value="ECO:0007669"/>
    <property type="project" value="InterPro"/>
</dbReference>
<dbReference type="GO" id="GO:0006261">
    <property type="term" value="P:DNA-templated DNA replication"/>
    <property type="evidence" value="ECO:0000318"/>
    <property type="project" value="GO_Central"/>
</dbReference>
<dbReference type="GO" id="GO:0016539">
    <property type="term" value="P:intein-mediated protein splicing"/>
    <property type="evidence" value="ECO:0007669"/>
    <property type="project" value="InterPro"/>
</dbReference>
<dbReference type="GO" id="GO:0006314">
    <property type="term" value="P:intron homing"/>
    <property type="evidence" value="ECO:0007669"/>
    <property type="project" value="UniProtKB-KW"/>
</dbReference>
<dbReference type="CDD" id="cd05780">
    <property type="entry name" value="DNA_polB_Kod1_like_exo"/>
    <property type="match status" value="1"/>
</dbReference>
<dbReference type="CDD" id="cd00081">
    <property type="entry name" value="Hint"/>
    <property type="match status" value="3"/>
</dbReference>
<dbReference type="FunFam" id="3.30.342.10:FF:000015">
    <property type="entry name" value="DNA polymerase"/>
    <property type="match status" value="1"/>
</dbReference>
<dbReference type="FunFam" id="1.10.132.60:FF:000013">
    <property type="entry name" value="DNA polymerase Pol2"/>
    <property type="match status" value="1"/>
</dbReference>
<dbReference type="Gene3D" id="1.10.132.60">
    <property type="entry name" value="DNA polymerase family B, C-terminal domain"/>
    <property type="match status" value="1"/>
</dbReference>
<dbReference type="Gene3D" id="3.30.342.10">
    <property type="entry name" value="DNA Polymerase, chain B, domain 1"/>
    <property type="match status" value="1"/>
</dbReference>
<dbReference type="Gene3D" id="2.170.16.10">
    <property type="entry name" value="Hedgehog/Intein (Hint) domain"/>
    <property type="match status" value="1"/>
</dbReference>
<dbReference type="Gene3D" id="3.10.28.10">
    <property type="entry name" value="Homing endonucleases"/>
    <property type="match status" value="2"/>
</dbReference>
<dbReference type="Gene3D" id="1.10.8.1330">
    <property type="entry name" value="Intein homing endonuclease, domain III"/>
    <property type="match status" value="1"/>
</dbReference>
<dbReference type="Gene3D" id="1.10.10.1010">
    <property type="entry name" value="Intein homing endonuclease, domain IV"/>
    <property type="match status" value="1"/>
</dbReference>
<dbReference type="Gene3D" id="3.90.1600.10">
    <property type="entry name" value="Palm domain of DNA polymerase"/>
    <property type="match status" value="3"/>
</dbReference>
<dbReference type="Gene3D" id="3.30.420.10">
    <property type="entry name" value="Ribonuclease H-like superfamily/Ribonuclease H"/>
    <property type="match status" value="1"/>
</dbReference>
<dbReference type="InterPro" id="IPR006172">
    <property type="entry name" value="DNA-dir_DNA_pol_B"/>
</dbReference>
<dbReference type="InterPro" id="IPR017964">
    <property type="entry name" value="DNA-dir_DNA_pol_B_CS"/>
</dbReference>
<dbReference type="InterPro" id="IPR006133">
    <property type="entry name" value="DNA-dir_DNA_pol_B_exonuc"/>
</dbReference>
<dbReference type="InterPro" id="IPR006134">
    <property type="entry name" value="DNA-dir_DNA_pol_B_multi_dom"/>
</dbReference>
<dbReference type="InterPro" id="IPR043502">
    <property type="entry name" value="DNA/RNA_pol_sf"/>
</dbReference>
<dbReference type="InterPro" id="IPR042087">
    <property type="entry name" value="DNA_pol_B_thumb"/>
</dbReference>
<dbReference type="InterPro" id="IPR023211">
    <property type="entry name" value="DNA_pol_palm_dom_sf"/>
</dbReference>
<dbReference type="InterPro" id="IPR050240">
    <property type="entry name" value="DNA_pol_type-B"/>
</dbReference>
<dbReference type="InterPro" id="IPR003586">
    <property type="entry name" value="Hint_dom_C"/>
</dbReference>
<dbReference type="InterPro" id="IPR003587">
    <property type="entry name" value="Hint_dom_N"/>
</dbReference>
<dbReference type="InterPro" id="IPR036844">
    <property type="entry name" value="Hint_dom_sf"/>
</dbReference>
<dbReference type="InterPro" id="IPR027434">
    <property type="entry name" value="Homing_endonucl"/>
</dbReference>
<dbReference type="InterPro" id="IPR006142">
    <property type="entry name" value="INTEIN"/>
</dbReference>
<dbReference type="InterPro" id="IPR030934">
    <property type="entry name" value="Intein_C"/>
</dbReference>
<dbReference type="InterPro" id="IPR004042">
    <property type="entry name" value="Intein_endonuc_central"/>
</dbReference>
<dbReference type="InterPro" id="IPR006141">
    <property type="entry name" value="Intein_N"/>
</dbReference>
<dbReference type="InterPro" id="IPR004860">
    <property type="entry name" value="LAGLIDADG_dom"/>
</dbReference>
<dbReference type="InterPro" id="IPR041005">
    <property type="entry name" value="PI-TkoII_IV"/>
</dbReference>
<dbReference type="InterPro" id="IPR012337">
    <property type="entry name" value="RNaseH-like_sf"/>
</dbReference>
<dbReference type="InterPro" id="IPR036397">
    <property type="entry name" value="RNaseH_sf"/>
</dbReference>
<dbReference type="NCBIfam" id="TIGR01443">
    <property type="entry name" value="intein_Cterm"/>
    <property type="match status" value="2"/>
</dbReference>
<dbReference type="NCBIfam" id="TIGR01445">
    <property type="entry name" value="intein_Nterm"/>
    <property type="match status" value="1"/>
</dbReference>
<dbReference type="NCBIfam" id="TIGR00592">
    <property type="entry name" value="pol2"/>
    <property type="match status" value="2"/>
</dbReference>
<dbReference type="PANTHER" id="PTHR10322">
    <property type="entry name" value="DNA POLYMERASE CATALYTIC SUBUNIT"/>
    <property type="match status" value="1"/>
</dbReference>
<dbReference type="PANTHER" id="PTHR10322:SF23">
    <property type="entry name" value="DNA POLYMERASE DELTA CATALYTIC SUBUNIT"/>
    <property type="match status" value="1"/>
</dbReference>
<dbReference type="Pfam" id="PF00136">
    <property type="entry name" value="DNA_pol_B"/>
    <property type="match status" value="2"/>
</dbReference>
<dbReference type="Pfam" id="PF03104">
    <property type="entry name" value="DNA_pol_B_exo1"/>
    <property type="match status" value="1"/>
</dbReference>
<dbReference type="Pfam" id="PF14890">
    <property type="entry name" value="Intein_splicing"/>
    <property type="match status" value="1"/>
</dbReference>
<dbReference type="Pfam" id="PF14528">
    <property type="entry name" value="LAGLIDADG_3"/>
    <property type="match status" value="3"/>
</dbReference>
<dbReference type="Pfam" id="PF18714">
    <property type="entry name" value="PI-TkoII_IV"/>
    <property type="match status" value="1"/>
</dbReference>
<dbReference type="PRINTS" id="PR00379">
    <property type="entry name" value="INTEIN"/>
</dbReference>
<dbReference type="SMART" id="SM00305">
    <property type="entry name" value="HintC"/>
    <property type="match status" value="2"/>
</dbReference>
<dbReference type="SMART" id="SM00306">
    <property type="entry name" value="HintN"/>
    <property type="match status" value="2"/>
</dbReference>
<dbReference type="SMART" id="SM00486">
    <property type="entry name" value="POLBc"/>
    <property type="match status" value="1"/>
</dbReference>
<dbReference type="SUPFAM" id="SSF56672">
    <property type="entry name" value="DNA/RNA polymerases"/>
    <property type="match status" value="3"/>
</dbReference>
<dbReference type="SUPFAM" id="SSF51294">
    <property type="entry name" value="Hedgehog/intein (Hint) domain"/>
    <property type="match status" value="2"/>
</dbReference>
<dbReference type="SUPFAM" id="SSF55608">
    <property type="entry name" value="Homing endonucleases"/>
    <property type="match status" value="2"/>
</dbReference>
<dbReference type="SUPFAM" id="SSF53098">
    <property type="entry name" value="Ribonuclease H-like"/>
    <property type="match status" value="1"/>
</dbReference>
<dbReference type="PROSITE" id="PS00116">
    <property type="entry name" value="DNA_POLYMERASE_B"/>
    <property type="match status" value="1"/>
</dbReference>
<dbReference type="PROSITE" id="PS50818">
    <property type="entry name" value="INTEIN_C_TER"/>
    <property type="match status" value="2"/>
</dbReference>
<dbReference type="PROSITE" id="PS50819">
    <property type="entry name" value="INTEIN_ENDONUCLEASE"/>
    <property type="match status" value="2"/>
</dbReference>
<dbReference type="PROSITE" id="PS50817">
    <property type="entry name" value="INTEIN_N_TER"/>
    <property type="match status" value="2"/>
</dbReference>
<keyword id="KW-0002">3D-structure</keyword>
<keyword id="KW-0068">Autocatalytic cleavage</keyword>
<keyword id="KW-0903">Direct protein sequencing</keyword>
<keyword id="KW-1015">Disulfide bond</keyword>
<keyword id="KW-0235">DNA replication</keyword>
<keyword id="KW-0238">DNA-binding</keyword>
<keyword id="KW-0239">DNA-directed DNA polymerase</keyword>
<keyword id="KW-0255">Endonuclease</keyword>
<keyword id="KW-0269">Exonuclease</keyword>
<keyword id="KW-0378">Hydrolase</keyword>
<keyword id="KW-0404">Intron homing</keyword>
<keyword id="KW-0540">Nuclease</keyword>
<keyword id="KW-0548">Nucleotidyltransferase</keyword>
<keyword id="KW-0651">Protein splicing</keyword>
<keyword id="KW-1185">Reference proteome</keyword>
<keyword id="KW-0677">Repeat</keyword>
<keyword id="KW-0808">Transferase</keyword>
<proteinExistence type="evidence at protein level"/>
<name>DPOL_THEKO</name>
<evidence type="ECO:0000255" key="1">
    <source>
        <dbReference type="PROSITE-ProRule" id="PRU00273"/>
    </source>
</evidence>
<evidence type="ECO:0000269" key="2">
    <source>
    </source>
</evidence>
<evidence type="ECO:0000269" key="3">
    <source>
    </source>
</evidence>
<evidence type="ECO:0000269" key="4">
    <source>
    </source>
</evidence>
<evidence type="ECO:0000303" key="5">
    <source>
    </source>
</evidence>
<evidence type="ECO:0000303" key="6">
    <source>
    </source>
</evidence>
<evidence type="ECO:0000305" key="7"/>
<evidence type="ECO:0000305" key="8">
    <source>
    </source>
</evidence>
<evidence type="ECO:0000305" key="9">
    <source>
    </source>
</evidence>
<evidence type="ECO:0007744" key="10">
    <source>
        <dbReference type="PDB" id="1WNS"/>
    </source>
</evidence>
<evidence type="ECO:0007829" key="11">
    <source>
        <dbReference type="PDB" id="2CW7"/>
    </source>
</evidence>
<evidence type="ECO:0007829" key="12">
    <source>
        <dbReference type="PDB" id="2CW8"/>
    </source>
</evidence>
<evidence type="ECO:0007829" key="13">
    <source>
        <dbReference type="PDB" id="4K8Z"/>
    </source>
</evidence>
<evidence type="ECO:0007829" key="14">
    <source>
        <dbReference type="PDB" id="7OM3"/>
    </source>
</evidence>
<organism>
    <name type="scientific">Thermococcus kodakarensis (strain ATCC BAA-918 / JCM 12380 / KOD1)</name>
    <name type="common">Pyrococcus kodakaraensis (strain KOD1)</name>
    <dbReference type="NCBI Taxonomy" id="69014"/>
    <lineage>
        <taxon>Archaea</taxon>
        <taxon>Methanobacteriati</taxon>
        <taxon>Methanobacteriota</taxon>
        <taxon>Thermococci</taxon>
        <taxon>Thermococcales</taxon>
        <taxon>Thermococcaceae</taxon>
        <taxon>Thermococcus</taxon>
    </lineage>
</organism>